<comment type="function">
    <text evidence="1">The UvrABC repair system catalyzes the recognition and processing of DNA lesions. UvrC both incises the 5' and 3' sides of the lesion. The N-terminal half is responsible for the 3' incision and the C-terminal half is responsible for the 5' incision.</text>
</comment>
<comment type="subunit">
    <text evidence="1">Interacts with UvrB in an incision complex.</text>
</comment>
<comment type="subcellular location">
    <subcellularLocation>
        <location evidence="1">Cytoplasm</location>
    </subcellularLocation>
</comment>
<comment type="similarity">
    <text evidence="1">Belongs to the UvrC family.</text>
</comment>
<proteinExistence type="inferred from homology"/>
<keyword id="KW-0963">Cytoplasm</keyword>
<keyword id="KW-0227">DNA damage</keyword>
<keyword id="KW-0228">DNA excision</keyword>
<keyword id="KW-0234">DNA repair</keyword>
<keyword id="KW-0267">Excision nuclease</keyword>
<keyword id="KW-0742">SOS response</keyword>
<dbReference type="EMBL" id="AE017198">
    <property type="protein sequence ID" value="AAS08891.1"/>
    <property type="molecule type" value="Genomic_DNA"/>
</dbReference>
<dbReference type="RefSeq" id="WP_011161921.1">
    <property type="nucleotide sequence ID" value="NC_005362.1"/>
</dbReference>
<dbReference type="SMR" id="Q74JN8"/>
<dbReference type="KEGG" id="ljo:LJ_1070"/>
<dbReference type="PATRIC" id="fig|257314.6.peg.930"/>
<dbReference type="eggNOG" id="COG0322">
    <property type="taxonomic scope" value="Bacteria"/>
</dbReference>
<dbReference type="HOGENOM" id="CLU_014841_3_2_9"/>
<dbReference type="Proteomes" id="UP000000581">
    <property type="component" value="Chromosome"/>
</dbReference>
<dbReference type="GO" id="GO:0005737">
    <property type="term" value="C:cytoplasm"/>
    <property type="evidence" value="ECO:0007669"/>
    <property type="project" value="UniProtKB-SubCell"/>
</dbReference>
<dbReference type="GO" id="GO:0009380">
    <property type="term" value="C:excinuclease repair complex"/>
    <property type="evidence" value="ECO:0007669"/>
    <property type="project" value="InterPro"/>
</dbReference>
<dbReference type="GO" id="GO:0003677">
    <property type="term" value="F:DNA binding"/>
    <property type="evidence" value="ECO:0007669"/>
    <property type="project" value="UniProtKB-UniRule"/>
</dbReference>
<dbReference type="GO" id="GO:0009381">
    <property type="term" value="F:excinuclease ABC activity"/>
    <property type="evidence" value="ECO:0007669"/>
    <property type="project" value="UniProtKB-UniRule"/>
</dbReference>
<dbReference type="GO" id="GO:0006289">
    <property type="term" value="P:nucleotide-excision repair"/>
    <property type="evidence" value="ECO:0007669"/>
    <property type="project" value="UniProtKB-UniRule"/>
</dbReference>
<dbReference type="GO" id="GO:0009432">
    <property type="term" value="P:SOS response"/>
    <property type="evidence" value="ECO:0007669"/>
    <property type="project" value="UniProtKB-UniRule"/>
</dbReference>
<dbReference type="CDD" id="cd10434">
    <property type="entry name" value="GIY-YIG_UvrC_Cho"/>
    <property type="match status" value="1"/>
</dbReference>
<dbReference type="FunFam" id="3.40.1440.10:FF:000001">
    <property type="entry name" value="UvrABC system protein C"/>
    <property type="match status" value="1"/>
</dbReference>
<dbReference type="Gene3D" id="1.10.150.20">
    <property type="entry name" value="5' to 3' exonuclease, C-terminal subdomain"/>
    <property type="match status" value="1"/>
</dbReference>
<dbReference type="Gene3D" id="3.40.1440.10">
    <property type="entry name" value="GIY-YIG endonuclease"/>
    <property type="match status" value="1"/>
</dbReference>
<dbReference type="Gene3D" id="4.10.860.10">
    <property type="entry name" value="UVR domain"/>
    <property type="match status" value="1"/>
</dbReference>
<dbReference type="Gene3D" id="3.30.420.340">
    <property type="entry name" value="UvrC, RNAse H endonuclease domain"/>
    <property type="match status" value="1"/>
</dbReference>
<dbReference type="HAMAP" id="MF_00203">
    <property type="entry name" value="UvrC"/>
    <property type="match status" value="1"/>
</dbReference>
<dbReference type="InterPro" id="IPR000305">
    <property type="entry name" value="GIY-YIG_endonuc"/>
</dbReference>
<dbReference type="InterPro" id="IPR035901">
    <property type="entry name" value="GIY-YIG_endonuc_sf"/>
</dbReference>
<dbReference type="InterPro" id="IPR047296">
    <property type="entry name" value="GIY-YIG_UvrC_Cho"/>
</dbReference>
<dbReference type="InterPro" id="IPR010994">
    <property type="entry name" value="RuvA_2-like"/>
</dbReference>
<dbReference type="InterPro" id="IPR001943">
    <property type="entry name" value="UVR_dom"/>
</dbReference>
<dbReference type="InterPro" id="IPR036876">
    <property type="entry name" value="UVR_dom_sf"/>
</dbReference>
<dbReference type="InterPro" id="IPR050066">
    <property type="entry name" value="UvrABC_protein_C"/>
</dbReference>
<dbReference type="InterPro" id="IPR004791">
    <property type="entry name" value="UvrC"/>
</dbReference>
<dbReference type="InterPro" id="IPR001162">
    <property type="entry name" value="UvrC_RNase_H_dom"/>
</dbReference>
<dbReference type="InterPro" id="IPR038476">
    <property type="entry name" value="UvrC_RNase_H_dom_sf"/>
</dbReference>
<dbReference type="NCBIfam" id="TIGR00194">
    <property type="entry name" value="uvrC"/>
    <property type="match status" value="1"/>
</dbReference>
<dbReference type="PANTHER" id="PTHR30562:SF1">
    <property type="entry name" value="UVRABC SYSTEM PROTEIN C"/>
    <property type="match status" value="1"/>
</dbReference>
<dbReference type="PANTHER" id="PTHR30562">
    <property type="entry name" value="UVRC/OXIDOREDUCTASE"/>
    <property type="match status" value="1"/>
</dbReference>
<dbReference type="Pfam" id="PF01541">
    <property type="entry name" value="GIY-YIG"/>
    <property type="match status" value="1"/>
</dbReference>
<dbReference type="Pfam" id="PF14520">
    <property type="entry name" value="HHH_5"/>
    <property type="match status" value="1"/>
</dbReference>
<dbReference type="Pfam" id="PF02151">
    <property type="entry name" value="UVR"/>
    <property type="match status" value="1"/>
</dbReference>
<dbReference type="Pfam" id="PF22920">
    <property type="entry name" value="UvrC_RNaseH"/>
    <property type="match status" value="1"/>
</dbReference>
<dbReference type="Pfam" id="PF08459">
    <property type="entry name" value="UvrC_RNaseH_dom"/>
    <property type="match status" value="1"/>
</dbReference>
<dbReference type="SMART" id="SM00465">
    <property type="entry name" value="GIYc"/>
    <property type="match status" value="1"/>
</dbReference>
<dbReference type="SUPFAM" id="SSF46600">
    <property type="entry name" value="C-terminal UvrC-binding domain of UvrB"/>
    <property type="match status" value="1"/>
</dbReference>
<dbReference type="SUPFAM" id="SSF82771">
    <property type="entry name" value="GIY-YIG endonuclease"/>
    <property type="match status" value="1"/>
</dbReference>
<dbReference type="SUPFAM" id="SSF47781">
    <property type="entry name" value="RuvA domain 2-like"/>
    <property type="match status" value="1"/>
</dbReference>
<dbReference type="PROSITE" id="PS50164">
    <property type="entry name" value="GIY_YIG"/>
    <property type="match status" value="1"/>
</dbReference>
<dbReference type="PROSITE" id="PS50151">
    <property type="entry name" value="UVR"/>
    <property type="match status" value="1"/>
</dbReference>
<dbReference type="PROSITE" id="PS50165">
    <property type="entry name" value="UVRC"/>
    <property type="match status" value="1"/>
</dbReference>
<protein>
    <recommendedName>
        <fullName evidence="1">UvrABC system protein C</fullName>
        <shortName evidence="1">Protein UvrC</shortName>
    </recommendedName>
    <alternativeName>
        <fullName evidence="1">Excinuclease ABC subunit C</fullName>
    </alternativeName>
</protein>
<feature type="chain" id="PRO_0000227439" description="UvrABC system protein C">
    <location>
        <begin position="1"/>
        <end position="600"/>
    </location>
</feature>
<feature type="domain" description="GIY-YIG" evidence="1">
    <location>
        <begin position="15"/>
        <end position="92"/>
    </location>
</feature>
<feature type="domain" description="UVR" evidence="1">
    <location>
        <begin position="197"/>
        <end position="232"/>
    </location>
</feature>
<sequence length="600" mass="69328">MATEHIENKLKLLPDKPGCYLMKDVNGNVIYVGKSKNLKNRVRSYFKSKQVGRRAELVREIRDFDIITVSSDKESFLLEITLIKKYQPYYNVQLKQGTGYPYIEITNERDPQTRLTSIVHKDHGYYFGPYPNVYAAQATLKFIQKVWPLRRCTGHQGRPCLYYHMGQCLGACFKEVPKSTYDAQIRKIKRFLNGDIAQVKQDLTEKMTQASMDLEFERAAEIRDQLKYIEQTVEKQKIISNDHTQRDIFNFYVDKSWISIQIFFLRQAKLLRRETRLFPLTDTNDPQDAFVSFIAQFYGQRNRVLPKEVLVPAGMDNESLSEVLKVPVRTPQRGQKKALLEMAHDNAKLKLDEKFRLLELGNRKTKGAQKEIFDALGLPYGHRIESFDHSHIQGADPVSALVVFTDGEADKHEYRKYKLKGEVEHQNAADEVGNTREVVRRRYSRLLKEHKKMPDLILMDGGQIQVEACLDVLRNELNVNIPVAGMVKDDHHRTNHLIFGDPTKGEELKLIPLDPKSEGFYLMTRIQDEVHRFAITFHRRTHAKNALSSKLDEIKGIGPKSRNKLLRKFGSLKKIKEASVDELREAGLTLPQAQTVKLSL</sequence>
<organism>
    <name type="scientific">Lactobacillus johnsonii (strain CNCM I-12250 / La1 / NCC 533)</name>
    <dbReference type="NCBI Taxonomy" id="257314"/>
    <lineage>
        <taxon>Bacteria</taxon>
        <taxon>Bacillati</taxon>
        <taxon>Bacillota</taxon>
        <taxon>Bacilli</taxon>
        <taxon>Lactobacillales</taxon>
        <taxon>Lactobacillaceae</taxon>
        <taxon>Lactobacillus</taxon>
    </lineage>
</organism>
<reference key="1">
    <citation type="journal article" date="2004" name="Proc. Natl. Acad. Sci. U.S.A.">
        <title>The genome sequence of the probiotic intestinal bacterium Lactobacillus johnsonii NCC 533.</title>
        <authorList>
            <person name="Pridmore R.D."/>
            <person name="Berger B."/>
            <person name="Desiere F."/>
            <person name="Vilanova D."/>
            <person name="Barretto C."/>
            <person name="Pittet A.-C."/>
            <person name="Zwahlen M.-C."/>
            <person name="Rouvet M."/>
            <person name="Altermann E."/>
            <person name="Barrangou R."/>
            <person name="Mollet B."/>
            <person name="Mercenier A."/>
            <person name="Klaenhammer T."/>
            <person name="Arigoni F."/>
            <person name="Schell M.A."/>
        </authorList>
    </citation>
    <scope>NUCLEOTIDE SEQUENCE [LARGE SCALE GENOMIC DNA]</scope>
    <source>
        <strain>CNCM I-1225 / La1 / NCC 533</strain>
    </source>
</reference>
<name>UVRC_LACJO</name>
<accession>Q74JN8</accession>
<evidence type="ECO:0000255" key="1">
    <source>
        <dbReference type="HAMAP-Rule" id="MF_00203"/>
    </source>
</evidence>
<gene>
    <name evidence="1" type="primary">uvrC</name>
    <name type="ordered locus">LJ_1070</name>
</gene>